<proteinExistence type="inferred from homology"/>
<reference key="1">
    <citation type="submission" date="2007-06" db="EMBL/GenBank/DDBJ databases">
        <authorList>
            <person name="Dodson R.J."/>
            <person name="Harkins D."/>
            <person name="Paulsen I.T."/>
        </authorList>
    </citation>
    <scope>NUCLEOTIDE SEQUENCE [LARGE SCALE GENOMIC DNA]</scope>
    <source>
        <strain>DSM 24068 / PA7</strain>
    </source>
</reference>
<sequence>MIPGEYDIQPGDIELNAGRRTLALSVANTGDRPIQVGSHYHFFEVNDALAFDRPATRGMRLNIAAGTAVRFEPGQSREVELVELAGERRVYGFAGRVMGDL</sequence>
<organism>
    <name type="scientific">Pseudomonas paraeruginosa (strain DSM 24068 / PA7)</name>
    <name type="common">Pseudomonas aeruginosa (strain PA7)</name>
    <dbReference type="NCBI Taxonomy" id="381754"/>
    <lineage>
        <taxon>Bacteria</taxon>
        <taxon>Pseudomonadati</taxon>
        <taxon>Pseudomonadota</taxon>
        <taxon>Gammaproteobacteria</taxon>
        <taxon>Pseudomonadales</taxon>
        <taxon>Pseudomonadaceae</taxon>
        <taxon>Pseudomonas</taxon>
        <taxon>Pseudomonas paraeruginosa</taxon>
    </lineage>
</organism>
<evidence type="ECO:0000255" key="1">
    <source>
        <dbReference type="HAMAP-Rule" id="MF_01954"/>
    </source>
</evidence>
<protein>
    <recommendedName>
        <fullName evidence="1">Urease subunit beta</fullName>
        <ecNumber evidence="1">3.5.1.5</ecNumber>
    </recommendedName>
    <alternativeName>
        <fullName evidence="1">Urea amidohydrolase subunit beta</fullName>
    </alternativeName>
</protein>
<gene>
    <name evidence="1" type="primary">ureB</name>
    <name type="ordered locus">PSPA7_5588</name>
</gene>
<comment type="catalytic activity">
    <reaction evidence="1">
        <text>urea + 2 H2O + H(+) = hydrogencarbonate + 2 NH4(+)</text>
        <dbReference type="Rhea" id="RHEA:20557"/>
        <dbReference type="ChEBI" id="CHEBI:15377"/>
        <dbReference type="ChEBI" id="CHEBI:15378"/>
        <dbReference type="ChEBI" id="CHEBI:16199"/>
        <dbReference type="ChEBI" id="CHEBI:17544"/>
        <dbReference type="ChEBI" id="CHEBI:28938"/>
        <dbReference type="EC" id="3.5.1.5"/>
    </reaction>
</comment>
<comment type="pathway">
    <text evidence="1">Nitrogen metabolism; urea degradation; CO(2) and NH(3) from urea (urease route): step 1/1.</text>
</comment>
<comment type="subunit">
    <text evidence="1">Heterotrimer of UreA (gamma), UreB (beta) and UreC (alpha) subunits. Three heterotrimers associate to form the active enzyme.</text>
</comment>
<comment type="subcellular location">
    <subcellularLocation>
        <location evidence="1">Cytoplasm</location>
    </subcellularLocation>
</comment>
<comment type="similarity">
    <text evidence="1">Belongs to the urease beta subunit family.</text>
</comment>
<name>URE2_PSEP7</name>
<feature type="chain" id="PRO_1000070758" description="Urease subunit beta">
    <location>
        <begin position="1"/>
        <end position="101"/>
    </location>
</feature>
<dbReference type="EC" id="3.5.1.5" evidence="1"/>
<dbReference type="EMBL" id="CP000744">
    <property type="protein sequence ID" value="ABR86646.1"/>
    <property type="molecule type" value="Genomic_DNA"/>
</dbReference>
<dbReference type="RefSeq" id="WP_003157481.1">
    <property type="nucleotide sequence ID" value="NC_009656.1"/>
</dbReference>
<dbReference type="SMR" id="A6VCX4"/>
<dbReference type="KEGG" id="pap:PSPA7_5588"/>
<dbReference type="HOGENOM" id="CLU_129707_1_1_6"/>
<dbReference type="UniPathway" id="UPA00258">
    <property type="reaction ID" value="UER00370"/>
</dbReference>
<dbReference type="Proteomes" id="UP000001582">
    <property type="component" value="Chromosome"/>
</dbReference>
<dbReference type="GO" id="GO:0035550">
    <property type="term" value="C:urease complex"/>
    <property type="evidence" value="ECO:0007669"/>
    <property type="project" value="InterPro"/>
</dbReference>
<dbReference type="GO" id="GO:0009039">
    <property type="term" value="F:urease activity"/>
    <property type="evidence" value="ECO:0007669"/>
    <property type="project" value="UniProtKB-UniRule"/>
</dbReference>
<dbReference type="GO" id="GO:0043419">
    <property type="term" value="P:urea catabolic process"/>
    <property type="evidence" value="ECO:0007669"/>
    <property type="project" value="UniProtKB-UniRule"/>
</dbReference>
<dbReference type="CDD" id="cd00407">
    <property type="entry name" value="Urease_beta"/>
    <property type="match status" value="1"/>
</dbReference>
<dbReference type="FunFam" id="2.10.150.10:FF:000001">
    <property type="entry name" value="Urease subunit beta"/>
    <property type="match status" value="1"/>
</dbReference>
<dbReference type="Gene3D" id="2.10.150.10">
    <property type="entry name" value="Urease, beta subunit"/>
    <property type="match status" value="1"/>
</dbReference>
<dbReference type="HAMAP" id="MF_01954">
    <property type="entry name" value="Urease_beta"/>
    <property type="match status" value="1"/>
</dbReference>
<dbReference type="InterPro" id="IPR002019">
    <property type="entry name" value="Urease_beta-like"/>
</dbReference>
<dbReference type="InterPro" id="IPR036461">
    <property type="entry name" value="Urease_betasu_sf"/>
</dbReference>
<dbReference type="InterPro" id="IPR050069">
    <property type="entry name" value="Urease_subunit"/>
</dbReference>
<dbReference type="NCBIfam" id="NF009682">
    <property type="entry name" value="PRK13203.1"/>
    <property type="match status" value="1"/>
</dbReference>
<dbReference type="NCBIfam" id="TIGR00192">
    <property type="entry name" value="urease_beta"/>
    <property type="match status" value="1"/>
</dbReference>
<dbReference type="PANTHER" id="PTHR33569">
    <property type="entry name" value="UREASE"/>
    <property type="match status" value="1"/>
</dbReference>
<dbReference type="PANTHER" id="PTHR33569:SF1">
    <property type="entry name" value="UREASE"/>
    <property type="match status" value="1"/>
</dbReference>
<dbReference type="Pfam" id="PF00699">
    <property type="entry name" value="Urease_beta"/>
    <property type="match status" value="1"/>
</dbReference>
<dbReference type="SUPFAM" id="SSF51278">
    <property type="entry name" value="Urease, beta-subunit"/>
    <property type="match status" value="1"/>
</dbReference>
<keyword id="KW-0963">Cytoplasm</keyword>
<keyword id="KW-0378">Hydrolase</keyword>
<accession>A6VCX4</accession>